<sequence>MLTPRVLRALGWTGLFFLLLSPSNVLGASLSRDLETPPFLSFDPSNISINGAPLTEVPHAPSTESVSTNSESTNEHTITETTGKNAYIHNNASTDKQNANDTHKTPNILCDTEEVFVFLNETGRFVCTLKVDPPSDSEWSNFVLDLIFNPIEYHANEKNVEAARIAGLYGVPGSDYAYPRQSELISSIRRDPQGTFWTSPSPHGNKYFIWINKTTNTMGVEIRNVDYADNGYMQVIMRDHFNRPLIDKHIYIRVCQRPASVDVLAPPVLSGENYKASCIVRHFYPPGSVYVSWRQNGNIATPRKDRDGSFWWFESGRGATLVSTITLGNSGIDFPPKISCLVAWKQGDMISTTNATAIPTVYHHPRLSLAFKDGYAICTIECVPSEITVRWLVHDEAQPNTTYNTVVTGLCRTIDRHRNLLSRIPVWDNWTKTKYTCRLIGYPFDEDKFQDSEYYDATPAARGTPMVITVTAVLGLAVILGMGIIMTALCLYNSTRKNIRL</sequence>
<name>GC_GAHVM</name>
<protein>
    <recommendedName>
        <fullName>Envelope glycoprotein C homolog</fullName>
    </recommendedName>
    <alternativeName>
        <fullName>A antigen</fullName>
    </alternativeName>
    <alternativeName>
        <fullName>Glycoprotein A</fullName>
        <shortName>GA</shortName>
    </alternativeName>
    <alternativeName>
        <fullName>Secretory glycoprotein GP57-65</fullName>
    </alternativeName>
</protein>
<dbReference type="EMBL" id="D90001">
    <property type="protein sequence ID" value="BAA14052.1"/>
    <property type="molecule type" value="Genomic_DNA"/>
</dbReference>
<dbReference type="EMBL" id="AF243438">
    <property type="protein sequence ID" value="AAG14237.1"/>
    <property type="molecule type" value="Genomic_DNA"/>
</dbReference>
<dbReference type="GlyCosmos" id="P22651">
    <property type="glycosylation" value="8 sites, No reported glycans"/>
</dbReference>
<dbReference type="KEGG" id="vg:4811518"/>
<dbReference type="Proteomes" id="UP000008072">
    <property type="component" value="Segment"/>
</dbReference>
<dbReference type="GO" id="GO:0005576">
    <property type="term" value="C:extracellular region"/>
    <property type="evidence" value="ECO:0007669"/>
    <property type="project" value="UniProtKB-SubCell"/>
</dbReference>
<dbReference type="GO" id="GO:0020002">
    <property type="term" value="C:host cell plasma membrane"/>
    <property type="evidence" value="ECO:0007669"/>
    <property type="project" value="UniProtKB-SubCell"/>
</dbReference>
<dbReference type="GO" id="GO:0016020">
    <property type="term" value="C:membrane"/>
    <property type="evidence" value="ECO:0007669"/>
    <property type="project" value="UniProtKB-KW"/>
</dbReference>
<dbReference type="InterPro" id="IPR001038">
    <property type="entry name" value="GA_GC"/>
</dbReference>
<dbReference type="InterPro" id="IPR007110">
    <property type="entry name" value="Ig-like_dom"/>
</dbReference>
<dbReference type="InterPro" id="IPR036179">
    <property type="entry name" value="Ig-like_dom_sf"/>
</dbReference>
<dbReference type="InterPro" id="IPR001654">
    <property type="entry name" value="Marek_A"/>
</dbReference>
<dbReference type="Pfam" id="PF02124">
    <property type="entry name" value="Marek_A"/>
    <property type="match status" value="1"/>
</dbReference>
<dbReference type="PRINTS" id="PR00675">
    <property type="entry name" value="MAREKSGPA"/>
</dbReference>
<dbReference type="SUPFAM" id="SSF48726">
    <property type="entry name" value="Immunoglobulin"/>
    <property type="match status" value="1"/>
</dbReference>
<dbReference type="PROSITE" id="PS50835">
    <property type="entry name" value="IG_LIKE"/>
    <property type="match status" value="1"/>
</dbReference>
<organismHost>
    <name type="scientific">Gallus gallus</name>
    <name type="common">Chicken</name>
    <dbReference type="NCBI Taxonomy" id="9031"/>
</organismHost>
<feature type="signal peptide" evidence="1">
    <location>
        <begin position="1"/>
        <end position="27"/>
    </location>
</feature>
<feature type="chain" id="PRO_0000038209" description="Envelope glycoprotein C homolog">
    <location>
        <begin position="28"/>
        <end position="501"/>
    </location>
</feature>
<feature type="topological domain" description="Virion surface" evidence="1">
    <location>
        <begin position="28"/>
        <end position="465"/>
    </location>
</feature>
<feature type="transmembrane region" description="Helical" evidence="1">
    <location>
        <begin position="466"/>
        <end position="492"/>
    </location>
</feature>
<feature type="topological domain" description="Cytoplasmic" evidence="1">
    <location>
        <begin position="493"/>
        <end position="501"/>
    </location>
</feature>
<feature type="domain" description="Ig-like">
    <location>
        <begin position="258"/>
        <end position="356"/>
    </location>
</feature>
<feature type="region of interest" description="Disordered" evidence="2">
    <location>
        <begin position="53"/>
        <end position="86"/>
    </location>
</feature>
<feature type="compositionally biased region" description="Low complexity" evidence="2">
    <location>
        <begin position="62"/>
        <end position="72"/>
    </location>
</feature>
<feature type="glycosylation site" description="N-linked (GlcNAc...) asparagine; by host" evidence="1">
    <location>
        <position position="46"/>
    </location>
</feature>
<feature type="glycosylation site" description="N-linked (GlcNAc...) asparagine; by host" evidence="1">
    <location>
        <position position="91"/>
    </location>
</feature>
<feature type="glycosylation site" description="N-linked (GlcNAc...) asparagine; by host" evidence="1">
    <location>
        <position position="100"/>
    </location>
</feature>
<feature type="glycosylation site" description="N-linked (GlcNAc...) asparagine; by host" evidence="1">
    <location>
        <position position="120"/>
    </location>
</feature>
<feature type="glycosylation site" description="N-linked (GlcNAc...) asparagine; by host" evidence="1">
    <location>
        <position position="212"/>
    </location>
</feature>
<feature type="glycosylation site" description="N-linked (GlcNAc...) asparagine; by host" evidence="1">
    <location>
        <position position="354"/>
    </location>
</feature>
<feature type="glycosylation site" description="N-linked (GlcNAc...) asparagine; by host" evidence="1">
    <location>
        <position position="400"/>
    </location>
</feature>
<feature type="glycosylation site" description="N-linked (GlcNAc...) asparagine; by host" evidence="1">
    <location>
        <position position="429"/>
    </location>
</feature>
<accession>P22651</accession>
<accession>Q6LAR3</accession>
<accession>Q77MR8</accession>
<keyword id="KW-0325">Glycoprotein</keyword>
<keyword id="KW-1032">Host cell membrane</keyword>
<keyword id="KW-1043">Host membrane</keyword>
<keyword id="KW-0945">Host-virus interaction</keyword>
<keyword id="KW-0393">Immunoglobulin domain</keyword>
<keyword id="KW-0472">Membrane</keyword>
<keyword id="KW-1185">Reference proteome</keyword>
<keyword id="KW-0964">Secreted</keyword>
<keyword id="KW-0732">Signal</keyword>
<keyword id="KW-0812">Transmembrane</keyword>
<keyword id="KW-1133">Transmembrane helix</keyword>
<evidence type="ECO:0000255" key="1"/>
<evidence type="ECO:0000256" key="2">
    <source>
        <dbReference type="SAM" id="MobiDB-lite"/>
    </source>
</evidence>
<evidence type="ECO:0000305" key="3"/>
<proteinExistence type="inferred from homology"/>
<reference key="1">
    <citation type="journal article" date="1989" name="Virus Genes">
        <title>Comparison of the sequence of the secretory glycoprotein A (gA) gene in Md5 and BC-1 strains of Marek's disease virus type 1.</title>
        <authorList>
            <person name="Ihara T."/>
            <person name="Kato A."/>
            <person name="Ueda S."/>
            <person name="Ishihama A."/>
            <person name="Hirai K."/>
        </authorList>
    </citation>
    <scope>NUCLEOTIDE SEQUENCE [GENOMIC DNA]</scope>
</reference>
<reference key="2">
    <citation type="journal article" date="2000" name="J. Virol.">
        <title>The genome of a very virulent Marek's disease virus.</title>
        <authorList>
            <person name="Tulman E.R."/>
            <person name="Afonso C.L."/>
            <person name="Lu Z."/>
            <person name="Zsak L."/>
            <person name="Rock D.L."/>
            <person name="Kutish G.F."/>
        </authorList>
    </citation>
    <scope>NUCLEOTIDE SEQUENCE [LARGE SCALE GENOMIC DNA]</scope>
</reference>
<comment type="function">
    <text>May play an immunoevasive role in the pathogenesis of Marek's disease. It is a candidate for causing the early-stage immunosuppression that occurs after MDHV infection.</text>
</comment>
<comment type="subcellular location">
    <subcellularLocation>
        <location>Secreted</location>
    </subcellularLocation>
    <subcellularLocation>
        <location>Host cell membrane</location>
        <topology>Single-pass membrane protein</topology>
    </subcellularLocation>
    <text>Predominantly secreted. Secreted, but a small amount of mature GP57-65 is anchored in the plasma membrane or held by other interactions.</text>
</comment>
<comment type="similarity">
    <text evidence="3">Belongs to the herpesviridae glycoprotein C family.</text>
</comment>
<organism>
    <name type="scientific">Gallid herpesvirus 2 (strain Chicken/Md5/ATCC VR-987)</name>
    <name type="common">GaHV-2</name>
    <name type="synonym">Marek's disease herpesvirus type 1</name>
    <dbReference type="NCBI Taxonomy" id="10389"/>
    <lineage>
        <taxon>Viruses</taxon>
        <taxon>Duplodnaviria</taxon>
        <taxon>Heunggongvirae</taxon>
        <taxon>Peploviricota</taxon>
        <taxon>Herviviricetes</taxon>
        <taxon>Herpesvirales</taxon>
        <taxon>Orthoherpesviridae</taxon>
        <taxon>Alphaherpesvirinae</taxon>
        <taxon>Mardivirus</taxon>
        <taxon>Mardivirus gallidalpha2</taxon>
        <taxon>Gallid alphaherpesvirus 2</taxon>
    </lineage>
</organism>
<gene>
    <name type="primary">gC</name>
    <name type="ORF">GA</name>
</gene>